<organism>
    <name type="scientific">Archaeoglobus fulgidus (strain ATCC 49558 / DSM 4304 / JCM 9628 / NBRC 100126 / VC-16)</name>
    <dbReference type="NCBI Taxonomy" id="224325"/>
    <lineage>
        <taxon>Archaea</taxon>
        <taxon>Methanobacteriati</taxon>
        <taxon>Methanobacteriota</taxon>
        <taxon>Archaeoglobi</taxon>
        <taxon>Archaeoglobales</taxon>
        <taxon>Archaeoglobaceae</taxon>
        <taxon>Archaeoglobus</taxon>
    </lineage>
</organism>
<protein>
    <recommendedName>
        <fullName>Sulfite reductase, dissimilatory-type subunit beta</fullName>
        <ecNumber evidence="3 4">1.8.1.22</ecNumber>
    </recommendedName>
    <alternativeName>
        <fullName>Hydrogensulfite reductase subunit beta</fullName>
    </alternativeName>
</protein>
<keyword id="KW-0002">3D-structure</keyword>
<keyword id="KW-0004">4Fe-4S</keyword>
<keyword id="KW-0903">Direct protein sequencing</keyword>
<keyword id="KW-0349">Heme</keyword>
<keyword id="KW-0408">Iron</keyword>
<keyword id="KW-0411">Iron-sulfur</keyword>
<keyword id="KW-0472">Membrane</keyword>
<keyword id="KW-0479">Metal-binding</keyword>
<keyword id="KW-0560">Oxidoreductase</keyword>
<keyword id="KW-1185">Reference proteome</keyword>
<dbReference type="EC" id="1.8.1.22" evidence="3 4"/>
<dbReference type="EMBL" id="M95624">
    <property type="protein sequence ID" value="AAB17214.1"/>
    <property type="molecule type" value="Genomic_DNA"/>
</dbReference>
<dbReference type="EMBL" id="AE000782">
    <property type="protein sequence ID" value="AAB90811.1"/>
    <property type="status" value="ALT_INIT"/>
    <property type="molecule type" value="Genomic_DNA"/>
</dbReference>
<dbReference type="PIR" id="H69302">
    <property type="entry name" value="H69302"/>
</dbReference>
<dbReference type="RefSeq" id="WP_048064231.1">
    <property type="nucleotide sequence ID" value="NC_000917.1"/>
</dbReference>
<dbReference type="PDB" id="3MM5">
    <property type="method" value="X-ray"/>
    <property type="resolution" value="1.80 A"/>
    <property type="chains" value="B/E=1-366"/>
</dbReference>
<dbReference type="PDB" id="3MM6">
    <property type="method" value="X-ray"/>
    <property type="resolution" value="1.90 A"/>
    <property type="chains" value="B/E=1-366"/>
</dbReference>
<dbReference type="PDB" id="3MM7">
    <property type="method" value="X-ray"/>
    <property type="resolution" value="1.90 A"/>
    <property type="chains" value="B/E=1-366"/>
</dbReference>
<dbReference type="PDB" id="3MM8">
    <property type="method" value="X-ray"/>
    <property type="resolution" value="2.28 A"/>
    <property type="chains" value="B/E=1-366"/>
</dbReference>
<dbReference type="PDB" id="3MM9">
    <property type="method" value="X-ray"/>
    <property type="resolution" value="2.10 A"/>
    <property type="chains" value="B/E=1-366"/>
</dbReference>
<dbReference type="PDB" id="3MMA">
    <property type="method" value="X-ray"/>
    <property type="resolution" value="2.30 A"/>
    <property type="chains" value="B/E=1-366"/>
</dbReference>
<dbReference type="PDB" id="3MMB">
    <property type="method" value="X-ray"/>
    <property type="resolution" value="2.30 A"/>
    <property type="chains" value="B/E=1-366"/>
</dbReference>
<dbReference type="PDB" id="3MMC">
    <property type="method" value="X-ray"/>
    <property type="resolution" value="2.04 A"/>
    <property type="chains" value="B/E=1-366"/>
</dbReference>
<dbReference type="PDBsum" id="3MM5"/>
<dbReference type="PDBsum" id="3MM6"/>
<dbReference type="PDBsum" id="3MM7"/>
<dbReference type="PDBsum" id="3MM8"/>
<dbReference type="PDBsum" id="3MM9"/>
<dbReference type="PDBsum" id="3MMA"/>
<dbReference type="PDBsum" id="3MMB"/>
<dbReference type="PDBsum" id="3MMC"/>
<dbReference type="SMR" id="Q59110"/>
<dbReference type="STRING" id="224325.AF_0424"/>
<dbReference type="PaxDb" id="224325-AF_0424"/>
<dbReference type="EnsemblBacteria" id="AAB90811">
    <property type="protein sequence ID" value="AAB90811"/>
    <property type="gene ID" value="AF_0424"/>
</dbReference>
<dbReference type="GeneID" id="24793962"/>
<dbReference type="KEGG" id="afu:AF_0424"/>
<dbReference type="eggNOG" id="arCOG02059">
    <property type="taxonomic scope" value="Archaea"/>
</dbReference>
<dbReference type="HOGENOM" id="CLU_044442_0_0_2"/>
<dbReference type="OrthoDB" id="15347at2157"/>
<dbReference type="PhylomeDB" id="Q59110"/>
<dbReference type="BioCyc" id="MetaCyc:MONOMER-12501"/>
<dbReference type="BRENDA" id="1.8.99.5">
    <property type="organism ID" value="414"/>
</dbReference>
<dbReference type="EvolutionaryTrace" id="Q59110"/>
<dbReference type="Proteomes" id="UP000002199">
    <property type="component" value="Chromosome"/>
</dbReference>
<dbReference type="GO" id="GO:0016020">
    <property type="term" value="C:membrane"/>
    <property type="evidence" value="ECO:0007669"/>
    <property type="project" value="UniProtKB-SubCell"/>
</dbReference>
<dbReference type="GO" id="GO:0009337">
    <property type="term" value="C:sulfite reductase complex (NADPH)"/>
    <property type="evidence" value="ECO:0007669"/>
    <property type="project" value="TreeGrafter"/>
</dbReference>
<dbReference type="GO" id="GO:0051539">
    <property type="term" value="F:4 iron, 4 sulfur cluster binding"/>
    <property type="evidence" value="ECO:0007669"/>
    <property type="project" value="UniProtKB-KW"/>
</dbReference>
<dbReference type="GO" id="GO:0018551">
    <property type="term" value="F:dissimilatory sulfite reductase (NADH) activity"/>
    <property type="evidence" value="ECO:0007669"/>
    <property type="project" value="InterPro"/>
</dbReference>
<dbReference type="GO" id="GO:0009055">
    <property type="term" value="F:electron transfer activity"/>
    <property type="evidence" value="ECO:0007669"/>
    <property type="project" value="InterPro"/>
</dbReference>
<dbReference type="GO" id="GO:0020037">
    <property type="term" value="F:heme binding"/>
    <property type="evidence" value="ECO:0007669"/>
    <property type="project" value="InterPro"/>
</dbReference>
<dbReference type="GO" id="GO:0046872">
    <property type="term" value="F:metal ion binding"/>
    <property type="evidence" value="ECO:0007669"/>
    <property type="project" value="UniProtKB-KW"/>
</dbReference>
<dbReference type="GO" id="GO:0050311">
    <property type="term" value="F:sulfite reductase (ferredoxin) activity"/>
    <property type="evidence" value="ECO:0007669"/>
    <property type="project" value="TreeGrafter"/>
</dbReference>
<dbReference type="GO" id="GO:0016002">
    <property type="term" value="F:sulfite reductase activity"/>
    <property type="evidence" value="ECO:0007669"/>
    <property type="project" value="TreeGrafter"/>
</dbReference>
<dbReference type="GO" id="GO:0000103">
    <property type="term" value="P:sulfate assimilation"/>
    <property type="evidence" value="ECO:0007669"/>
    <property type="project" value="TreeGrafter"/>
</dbReference>
<dbReference type="Gene3D" id="3.30.70.20">
    <property type="match status" value="1"/>
</dbReference>
<dbReference type="Gene3D" id="3.30.70.3340">
    <property type="match status" value="1"/>
</dbReference>
<dbReference type="Gene3D" id="3.30.413.10">
    <property type="entry name" value="Sulfite Reductase Hemoprotein, domain 1"/>
    <property type="match status" value="1"/>
</dbReference>
<dbReference type="InterPro" id="IPR017896">
    <property type="entry name" value="4Fe4S_Fe-S-bd"/>
</dbReference>
<dbReference type="InterPro" id="IPR017900">
    <property type="entry name" value="4Fe4S_Fe_S_CS"/>
</dbReference>
<dbReference type="InterPro" id="IPR011808">
    <property type="entry name" value="DsrB"/>
</dbReference>
<dbReference type="InterPro" id="IPR005117">
    <property type="entry name" value="NiRdtase/SiRdtase_haem-b_fer"/>
</dbReference>
<dbReference type="InterPro" id="IPR036136">
    <property type="entry name" value="Nit/Sulf_reduc_fer-like_dom_sf"/>
</dbReference>
<dbReference type="InterPro" id="IPR006067">
    <property type="entry name" value="NO2/SO3_Rdtase_4Fe4S_dom"/>
</dbReference>
<dbReference type="InterPro" id="IPR045169">
    <property type="entry name" value="NO2/SO3_Rdtase_4Fe4S_prot"/>
</dbReference>
<dbReference type="InterPro" id="IPR045854">
    <property type="entry name" value="NO2/SO3_Rdtase_4Fe4S_sf"/>
</dbReference>
<dbReference type="NCBIfam" id="TIGR02066">
    <property type="entry name" value="dsrB"/>
    <property type="match status" value="1"/>
</dbReference>
<dbReference type="PANTHER" id="PTHR11493:SF47">
    <property type="entry name" value="SULFITE REDUCTASE [NADPH] SUBUNIT BETA"/>
    <property type="match status" value="1"/>
</dbReference>
<dbReference type="PANTHER" id="PTHR11493">
    <property type="entry name" value="SULFITE REDUCTASE [NADPH] SUBUNIT BETA-RELATED"/>
    <property type="match status" value="1"/>
</dbReference>
<dbReference type="Pfam" id="PF00037">
    <property type="entry name" value="Fer4"/>
    <property type="match status" value="1"/>
</dbReference>
<dbReference type="Pfam" id="PF01077">
    <property type="entry name" value="NIR_SIR"/>
    <property type="match status" value="1"/>
</dbReference>
<dbReference type="Pfam" id="PF03460">
    <property type="entry name" value="NIR_SIR_ferr"/>
    <property type="match status" value="1"/>
</dbReference>
<dbReference type="SUPFAM" id="SSF54862">
    <property type="entry name" value="4Fe-4S ferredoxins"/>
    <property type="match status" value="1"/>
</dbReference>
<dbReference type="SUPFAM" id="SSF56014">
    <property type="entry name" value="Nitrite and sulphite reductase 4Fe-4S domain-like"/>
    <property type="match status" value="1"/>
</dbReference>
<dbReference type="SUPFAM" id="SSF55124">
    <property type="entry name" value="Nitrite/Sulfite reductase N-terminal domain-like"/>
    <property type="match status" value="1"/>
</dbReference>
<dbReference type="PROSITE" id="PS00198">
    <property type="entry name" value="4FE4S_FER_1"/>
    <property type="match status" value="1"/>
</dbReference>
<dbReference type="PROSITE" id="PS51379">
    <property type="entry name" value="4FE4S_FER_2"/>
    <property type="match status" value="1"/>
</dbReference>
<gene>
    <name type="primary">dsrB</name>
    <name type="ordered locus">AF_0424</name>
</gene>
<sequence length="366" mass="41570">MVVEGVKTDFGPPYFRDLLHPVIAKNYGKWKYHEVVKPGVIKRVAESGDVIYVVRFGTPRLLSIYTVRELCDIADKYSDGYLRWTSRNNVEFFVTDESKIDDLINEVQERVGFPCGGTWDAVKGEYGLSNIVHTQGWIHCHTPAIDASGIVKAVMDELYEYFTDHKLPAMCRISLACCANMCGAVHASDIAIVGIHRTPPIPNDEAIRKTCEIPSTVAACPTGALKPDMKNKTIKVDVEKCMYCGNCYTMCPGMPLFDPENDGAAIMVGGKLSEARRMPELSKVVVPWVPNEPPRWPTLVKYVKQILEAWAANANKHERLIEWVDRIGWERFFELTGLEFTQHLIDDYRITPYFYSEFRASTQFKW</sequence>
<reference key="1">
    <citation type="journal article" date="1993" name="J. Gen. Microbiol.">
        <title>Dissimilatory sulphite reductase from Archaeoglobus fulgidus: physico-chemical properties of the enzyme and cloning, sequencing and analysis of the reductase genes.</title>
        <authorList>
            <person name="Dahl C."/>
            <person name="Kredich N.M."/>
            <person name="Deutzmann R."/>
            <person name="Trueper H.G."/>
        </authorList>
    </citation>
    <scope>NUCLEOTIDE SEQUENCE [GENOMIC DNA]</scope>
    <scope>PROTEIN SEQUENCE OF 332-359</scope>
    <scope>FUNCTION</scope>
    <scope>CATALYTIC ACTIVITY</scope>
    <source>
        <strain>ATCC 49558 / DSM 4304 / JCM 9628 / NBRC 100126 / VC-16</strain>
    </source>
</reference>
<reference key="2">
    <citation type="journal article" date="1997" name="Nature">
        <title>The complete genome sequence of the hyperthermophilic, sulphate-reducing archaeon Archaeoglobus fulgidus.</title>
        <authorList>
            <person name="Klenk H.-P."/>
            <person name="Clayton R.A."/>
            <person name="Tomb J.-F."/>
            <person name="White O."/>
            <person name="Nelson K.E."/>
            <person name="Ketchum K.A."/>
            <person name="Dodson R.J."/>
            <person name="Gwinn M.L."/>
            <person name="Hickey E.K."/>
            <person name="Peterson J.D."/>
            <person name="Richardson D.L."/>
            <person name="Kerlavage A.R."/>
            <person name="Graham D.E."/>
            <person name="Kyrpides N.C."/>
            <person name="Fleischmann R.D."/>
            <person name="Quackenbush J."/>
            <person name="Lee N.H."/>
            <person name="Sutton G.G."/>
            <person name="Gill S.R."/>
            <person name="Kirkness E.F."/>
            <person name="Dougherty B.A."/>
            <person name="McKenney K."/>
            <person name="Adams M.D."/>
            <person name="Loftus B.J."/>
            <person name="Peterson S.N."/>
            <person name="Reich C.I."/>
            <person name="McNeil L.K."/>
            <person name="Badger J.H."/>
            <person name="Glodek A."/>
            <person name="Zhou L."/>
            <person name="Overbeek R."/>
            <person name="Gocayne J.D."/>
            <person name="Weidman J.F."/>
            <person name="McDonald L.A."/>
            <person name="Utterback T.R."/>
            <person name="Cotton M.D."/>
            <person name="Spriggs T."/>
            <person name="Artiach P."/>
            <person name="Kaine B.P."/>
            <person name="Sykes S.M."/>
            <person name="Sadow P.W."/>
            <person name="D'Andrea K.P."/>
            <person name="Bowman C."/>
            <person name="Fujii C."/>
            <person name="Garland S.A."/>
            <person name="Mason T.M."/>
            <person name="Olsen G.J."/>
            <person name="Fraser C.M."/>
            <person name="Smith H.O."/>
            <person name="Woese C.R."/>
            <person name="Venter J.C."/>
        </authorList>
    </citation>
    <scope>NUCLEOTIDE SEQUENCE [LARGE SCALE GENOMIC DNA]</scope>
    <source>
        <strain>ATCC 49558 / DSM 4304 / JCM 9628 / NBRC 100126 / VC-16</strain>
    </source>
</reference>
<reference key="3">
    <citation type="journal article" date="2008" name="J. Mol. Biol.">
        <title>Structure of the dissimilatory sulfite reductase from the hyperthermophilic archaeon Archaeoglobus fulgidus.</title>
        <authorList>
            <person name="Schiffer A."/>
            <person name="Parey K."/>
            <person name="Warkentin E."/>
            <person name="Diederichs K."/>
            <person name="Huber H."/>
            <person name="Stetter K.O."/>
            <person name="Kroneck P.M.H."/>
            <person name="Ermler U."/>
        </authorList>
    </citation>
    <scope>X-RAY CRYSTALLOGRAPHY (2.04 ANGSTROMS) IN COMPLEX WITH DSRB; IRON-SULFUR (4FE-4S) AND SIROHEME</scope>
    <scope>SUBUNIT</scope>
    <scope>COFACTOR</scope>
    <scope>REACTION MECHANISM</scope>
</reference>
<reference key="4">
    <citation type="journal article" date="2010" name="Biochemistry">
        <title>Reaction cycle of the dissimilatory sulfite reductase from Archaeoglobus fulgidus.</title>
        <authorList>
            <person name="Parey K."/>
            <person name="Warkentin E."/>
            <person name="Kroneck P.M."/>
            <person name="Ermler U."/>
        </authorList>
    </citation>
    <scope>X-RAY CRYSTALLOGRAPHY (1.80 ANGSTROMS) IN COMPLEX WITH DSRB; IRON-SULFUR (4FE-4S); SIROHEME AND HYDROGENSULFITE</scope>
    <scope>COFACTOR</scope>
    <scope>SUBUNIT</scope>
    <scope>CATALYTIC ACTIVITY</scope>
    <scope>REACTION MECHANISM</scope>
</reference>
<feature type="chain" id="PRO_0000080027" description="Sulfite reductase, dissimilatory-type subunit beta">
    <location>
        <begin position="1"/>
        <end position="366"/>
    </location>
</feature>
<feature type="domain" description="4Fe-4S ferredoxin-type" evidence="1">
    <location>
        <begin position="232"/>
        <end position="262"/>
    </location>
</feature>
<feature type="binding site" evidence="2 3 8 9">
    <location>
        <position position="140"/>
    </location>
    <ligand>
        <name>[4Fe-4S] cluster</name>
        <dbReference type="ChEBI" id="CHEBI:49883"/>
        <label>1</label>
    </ligand>
</feature>
<feature type="binding site" evidence="2 3 8 9">
    <location>
        <position position="177"/>
    </location>
    <ligand>
        <name>[4Fe-4S] cluster</name>
        <dbReference type="ChEBI" id="CHEBI:49883"/>
        <label>1</label>
    </ligand>
</feature>
<feature type="binding site" evidence="2 3 8 9">
    <location>
        <position position="178"/>
    </location>
    <ligand>
        <name>[4Fe-4S] cluster</name>
        <dbReference type="ChEBI" id="CHEBI:49883"/>
        <label>1</label>
    </ligand>
</feature>
<feature type="binding site" evidence="2 3 8 9">
    <location>
        <position position="182"/>
    </location>
    <ligand>
        <name>[4Fe-4S] cluster</name>
        <dbReference type="ChEBI" id="CHEBI:49883"/>
        <label>1</label>
    </ligand>
</feature>
<feature type="binding site" description="axial binding residue" evidence="6 7">
    <location>
        <position position="182"/>
    </location>
    <ligand>
        <name>siroheme</name>
        <dbReference type="ChEBI" id="CHEBI:60052"/>
    </ligand>
    <ligandPart>
        <name>Fe</name>
        <dbReference type="ChEBI" id="CHEBI:18248"/>
    </ligandPart>
</feature>
<feature type="binding site" evidence="2 3 8 9">
    <location>
        <position position="220"/>
    </location>
    <ligand>
        <name>[4Fe-4S] cluster</name>
        <dbReference type="ChEBI" id="CHEBI:49883"/>
        <label>2</label>
    </ligand>
</feature>
<feature type="binding site" evidence="2 3 8 9">
    <location>
        <position position="241"/>
    </location>
    <ligand>
        <name>[4Fe-4S] cluster</name>
        <dbReference type="ChEBI" id="CHEBI:49883"/>
        <label>2</label>
    </ligand>
</feature>
<feature type="binding site" evidence="2 3 8 9">
    <location>
        <position position="244"/>
    </location>
    <ligand>
        <name>[4Fe-4S] cluster</name>
        <dbReference type="ChEBI" id="CHEBI:49883"/>
        <label>2</label>
    </ligand>
</feature>
<feature type="binding site" evidence="2 3 8 9">
    <location>
        <position position="247"/>
    </location>
    <ligand>
        <name>[4Fe-4S] cluster</name>
        <dbReference type="ChEBI" id="CHEBI:49883"/>
        <label>2</label>
    </ligand>
</feature>
<feature type="helix" evidence="10">
    <location>
        <begin position="15"/>
        <end position="18"/>
    </location>
</feature>
<feature type="helix" evidence="10">
    <location>
        <begin position="21"/>
        <end position="26"/>
    </location>
</feature>
<feature type="strand" evidence="10">
    <location>
        <begin position="30"/>
        <end position="37"/>
    </location>
</feature>
<feature type="strand" evidence="10">
    <location>
        <begin position="40"/>
        <end position="45"/>
    </location>
</feature>
<feature type="strand" evidence="10">
    <location>
        <begin position="50"/>
        <end position="56"/>
    </location>
</feature>
<feature type="strand" evidence="10">
    <location>
        <begin position="60"/>
        <end position="63"/>
    </location>
</feature>
<feature type="helix" evidence="10">
    <location>
        <begin position="64"/>
        <end position="77"/>
    </location>
</feature>
<feature type="strand" evidence="10">
    <location>
        <begin position="81"/>
        <end position="84"/>
    </location>
</feature>
<feature type="strand" evidence="10">
    <location>
        <begin position="90"/>
        <end position="95"/>
    </location>
</feature>
<feature type="helix" evidence="10">
    <location>
        <begin position="97"/>
        <end position="99"/>
    </location>
</feature>
<feature type="helix" evidence="10">
    <location>
        <begin position="100"/>
        <end position="111"/>
    </location>
</feature>
<feature type="turn" evidence="10">
    <location>
        <begin position="121"/>
        <end position="124"/>
    </location>
</feature>
<feature type="helix" evidence="10">
    <location>
        <begin position="136"/>
        <end position="139"/>
    </location>
</feature>
<feature type="helix" evidence="10">
    <location>
        <begin position="148"/>
        <end position="157"/>
    </location>
</feature>
<feature type="helix" evidence="10">
    <location>
        <begin position="159"/>
        <end position="163"/>
    </location>
</feature>
<feature type="strand" evidence="10">
    <location>
        <begin position="167"/>
        <end position="169"/>
    </location>
</feature>
<feature type="strand" evidence="10">
    <location>
        <begin position="173"/>
        <end position="178"/>
    </location>
</feature>
<feature type="strand" evidence="10">
    <location>
        <begin position="182"/>
        <end position="184"/>
    </location>
</feature>
<feature type="helix" evidence="10">
    <location>
        <begin position="185"/>
        <end position="187"/>
    </location>
</feature>
<feature type="strand" evidence="10">
    <location>
        <begin position="188"/>
        <end position="195"/>
    </location>
</feature>
<feature type="helix" evidence="10">
    <location>
        <begin position="204"/>
        <end position="210"/>
    </location>
</feature>
<feature type="helix" evidence="10">
    <location>
        <begin position="213"/>
        <end position="218"/>
    </location>
</feature>
<feature type="strand" evidence="10">
    <location>
        <begin position="225"/>
        <end position="228"/>
    </location>
</feature>
<feature type="turn" evidence="10">
    <location>
        <begin position="229"/>
        <end position="232"/>
    </location>
</feature>
<feature type="strand" evidence="10">
    <location>
        <begin position="233"/>
        <end position="236"/>
    </location>
</feature>
<feature type="helix" evidence="10">
    <location>
        <begin position="238"/>
        <end position="240"/>
    </location>
</feature>
<feature type="helix" evidence="10">
    <location>
        <begin position="246"/>
        <end position="250"/>
    </location>
</feature>
<feature type="turn" evidence="10">
    <location>
        <begin position="259"/>
        <end position="261"/>
    </location>
</feature>
<feature type="strand" evidence="10">
    <location>
        <begin position="263"/>
        <end position="268"/>
    </location>
</feature>
<feature type="strand" evidence="11">
    <location>
        <begin position="275"/>
        <end position="277"/>
    </location>
</feature>
<feature type="strand" evidence="10">
    <location>
        <begin position="283"/>
        <end position="290"/>
    </location>
</feature>
<feature type="turn" evidence="10">
    <location>
        <begin position="293"/>
        <end position="295"/>
    </location>
</feature>
<feature type="helix" evidence="10">
    <location>
        <begin position="297"/>
        <end position="313"/>
    </location>
</feature>
<feature type="helix" evidence="10">
    <location>
        <begin position="320"/>
        <end position="327"/>
    </location>
</feature>
<feature type="helix" evidence="10">
    <location>
        <begin position="329"/>
        <end position="336"/>
    </location>
</feature>
<feature type="helix" evidence="10">
    <location>
        <begin position="342"/>
        <end position="344"/>
    </location>
</feature>
<feature type="strand" evidence="11">
    <location>
        <begin position="350"/>
        <end position="352"/>
    </location>
</feature>
<feature type="helix" evidence="10">
    <location>
        <begin position="353"/>
        <end position="357"/>
    </location>
</feature>
<accession>Q59110</accession>
<comment type="function">
    <text evidence="4">Catalyzes the reduction of sulfite to sulfide. This is the terminal oxidation reaction in sulfate respiration.</text>
</comment>
<comment type="catalytic activity">
    <reaction evidence="4">
        <text>[DsrC protein]-trisulfide + NAD(+) + 3 H2O = [DsrC protein]-dithiol + sulfite + NADH + 3 H(+)</text>
        <dbReference type="Rhea" id="RHEA:78943"/>
        <dbReference type="Rhea" id="RHEA-COMP:11723"/>
        <dbReference type="Rhea" id="RHEA-COMP:19152"/>
        <dbReference type="ChEBI" id="CHEBI:15377"/>
        <dbReference type="ChEBI" id="CHEBI:15378"/>
        <dbReference type="ChEBI" id="CHEBI:17359"/>
        <dbReference type="ChEBI" id="CHEBI:29950"/>
        <dbReference type="ChEBI" id="CHEBI:57540"/>
        <dbReference type="ChEBI" id="CHEBI:57945"/>
        <dbReference type="ChEBI" id="CHEBI:229579"/>
        <dbReference type="EC" id="1.8.1.22"/>
    </reaction>
</comment>
<comment type="cofactor">
    <cofactor evidence="2 3">
        <name>[4Fe-4S] cluster</name>
        <dbReference type="ChEBI" id="CHEBI:49883"/>
    </cofactor>
    <text evidence="2 3">Binds 2 [4Fe-4S] cluster per subunit.</text>
</comment>
<comment type="cofactor">
    <cofactor evidence="2 3">
        <name>siroheme</name>
        <dbReference type="ChEBI" id="CHEBI:60052"/>
    </cofactor>
    <text evidence="2 3">Binds 1 siroheme per subunit.</text>
</comment>
<comment type="biophysicochemical properties">
    <temperatureDependence>
        <text>Highly thermostable. Inactive towards methylviologen below 55 degrees Celsius.</text>
    </temperatureDependence>
</comment>
<comment type="subunit">
    <text evidence="2 3">Heterotetramer of two alpha and two beta subunits.</text>
</comment>
<comment type="subcellular location">
    <subcellularLocation>
        <location>Membrane</location>
    </subcellularLocation>
    <text>Although the protein complex is found in the soluble fraction it may be membrane-associated in vivo.</text>
</comment>
<comment type="sequence caution" evidence="5">
    <conflict type="erroneous initiation">
        <sequence resource="EMBL-CDS" id="AAB90811"/>
    </conflict>
    <text>Extended N-terminus.</text>
</comment>
<proteinExistence type="evidence at protein level"/>
<name>DSRB_ARCFU</name>
<evidence type="ECO:0000255" key="1">
    <source>
        <dbReference type="PROSITE-ProRule" id="PRU00711"/>
    </source>
</evidence>
<evidence type="ECO:0000269" key="2">
    <source>
    </source>
</evidence>
<evidence type="ECO:0000269" key="3">
    <source>
    </source>
</evidence>
<evidence type="ECO:0000269" key="4">
    <source>
    </source>
</evidence>
<evidence type="ECO:0000305" key="5"/>
<evidence type="ECO:0000305" key="6">
    <source>
    </source>
</evidence>
<evidence type="ECO:0000305" key="7">
    <source>
    </source>
</evidence>
<evidence type="ECO:0007744" key="8">
    <source>
        <dbReference type="PDB" id="3MM5"/>
    </source>
</evidence>
<evidence type="ECO:0007744" key="9">
    <source>
        <dbReference type="PDB" id="3MMC"/>
    </source>
</evidence>
<evidence type="ECO:0007829" key="10">
    <source>
        <dbReference type="PDB" id="3MM5"/>
    </source>
</evidence>
<evidence type="ECO:0007829" key="11">
    <source>
        <dbReference type="PDB" id="3MM7"/>
    </source>
</evidence>